<proteinExistence type="inferred from homology"/>
<sequence>MAKTIAFDEEARRGLERGLNALADAVKVTLGPKGRNVVLEKKWGAPTITNDGVSIAKEIELEDPYEKIGAELVKEVAKKTDDVAGDGTTTATVLAQALVREGLRNMAAGANPLGLKRGIEKAVEAVTEHLLKEAKEVETKEQIAATAGISAGDPAIGELIAEAMDKVGKEGVITVEESNTFGLQLELTEGMRFDKGFISGYFATDAERQEAVLEDAYILLVSSKISTVKDLLPLLEKVIQSGKPLAIIAEDVEGEALSTLIVNKIRGTFKSVAIKAPGFGDRRKAMLQDMAILTGGQVISEEVGLSLETAGLELLGQARQVVVTKDETTIVDGAGSKEQIEGRVSQIRAEIESSDSDYDREKLQERLAKLAGGVAVIKAGAATEVELKERKHRIEDAVRNAKAAVEEGIVAGGGAALAQSGKVFETLNLEGDEATGANIVKVALDAPVKQIAINAGLEPGVVAEKVRNSPAGTGLNAATGVYEDLLAAGINDPVKVTRSALQNASSIAALFLTTEAVVADKPEKAGAPVDPTGGMGGMDF</sequence>
<organism>
    <name type="scientific">Tsukamurella paurometabola</name>
    <name type="common">Corynebacterium paurometabolum</name>
    <dbReference type="NCBI Taxonomy" id="2061"/>
    <lineage>
        <taxon>Bacteria</taxon>
        <taxon>Bacillati</taxon>
        <taxon>Actinomycetota</taxon>
        <taxon>Actinomycetes</taxon>
        <taxon>Mycobacteriales</taxon>
        <taxon>Tsukamurellaceae</taxon>
        <taxon>Tsukamurella</taxon>
    </lineage>
</organism>
<accession>Q9AFA5</accession>
<comment type="function">
    <text evidence="1">Together with its co-chaperonin GroES, plays an essential role in assisting protein folding. The GroEL-GroES system forms a nano-cage that allows encapsulation of the non-native substrate proteins and provides a physical environment optimized to promote and accelerate protein folding.</text>
</comment>
<comment type="catalytic activity">
    <reaction evidence="1">
        <text>ATP + H2O + a folded polypeptide = ADP + phosphate + an unfolded polypeptide.</text>
        <dbReference type="EC" id="5.6.1.7"/>
    </reaction>
</comment>
<comment type="subunit">
    <text evidence="1">Forms a cylinder of 14 subunits composed of two heptameric rings stacked back-to-back. Interacts with the co-chaperonin GroES.</text>
</comment>
<comment type="subcellular location">
    <subcellularLocation>
        <location evidence="1">Cytoplasm</location>
    </subcellularLocation>
</comment>
<comment type="similarity">
    <text evidence="1">Belongs to the chaperonin (HSP60) family.</text>
</comment>
<gene>
    <name evidence="1" type="primary">groEL</name>
    <name evidence="1" type="synonym">groL</name>
    <name type="synonym">hsp60</name>
</gene>
<reference key="1">
    <citation type="submission" date="2001-02" db="EMBL/GenBank/DDBJ databases">
        <title>Tsukamurella paurometabola heat shock protein 60 (hsp60) gene.</title>
        <authorList>
            <person name="Zimmermann O.S."/>
            <person name="Koechel H.G."/>
        </authorList>
    </citation>
    <scope>NUCLEOTIDE SEQUENCE [GENOMIC DNA]</scope>
</reference>
<evidence type="ECO:0000255" key="1">
    <source>
        <dbReference type="HAMAP-Rule" id="MF_00600"/>
    </source>
</evidence>
<feature type="chain" id="PRO_0000063591" description="Chaperonin GroEL">
    <location>
        <begin position="1"/>
        <end position="540"/>
    </location>
</feature>
<feature type="binding site" evidence="1">
    <location>
        <begin position="29"/>
        <end position="32"/>
    </location>
    <ligand>
        <name>ATP</name>
        <dbReference type="ChEBI" id="CHEBI:30616"/>
    </ligand>
</feature>
<feature type="binding site" evidence="1">
    <location>
        <begin position="86"/>
        <end position="90"/>
    </location>
    <ligand>
        <name>ATP</name>
        <dbReference type="ChEBI" id="CHEBI:30616"/>
    </ligand>
</feature>
<feature type="binding site" evidence="1">
    <location>
        <position position="413"/>
    </location>
    <ligand>
        <name>ATP</name>
        <dbReference type="ChEBI" id="CHEBI:30616"/>
    </ligand>
</feature>
<feature type="binding site" evidence="1">
    <location>
        <begin position="476"/>
        <end position="478"/>
    </location>
    <ligand>
        <name>ATP</name>
        <dbReference type="ChEBI" id="CHEBI:30616"/>
    </ligand>
</feature>
<feature type="binding site" evidence="1">
    <location>
        <position position="492"/>
    </location>
    <ligand>
        <name>ATP</name>
        <dbReference type="ChEBI" id="CHEBI:30616"/>
    </ligand>
</feature>
<protein>
    <recommendedName>
        <fullName evidence="1">Chaperonin GroEL</fullName>
        <ecNumber evidence="1">5.6.1.7</ecNumber>
    </recommendedName>
    <alternativeName>
        <fullName evidence="1">60 kDa chaperonin</fullName>
    </alternativeName>
    <alternativeName>
        <fullName evidence="1">Chaperonin-60</fullName>
        <shortName evidence="1">Cpn60</shortName>
    </alternativeName>
    <alternativeName>
        <fullName>Heat shock protein 60</fullName>
    </alternativeName>
</protein>
<keyword id="KW-0067">ATP-binding</keyword>
<keyword id="KW-0143">Chaperone</keyword>
<keyword id="KW-0963">Cytoplasm</keyword>
<keyword id="KW-0413">Isomerase</keyword>
<keyword id="KW-0547">Nucleotide-binding</keyword>
<name>CH60_TSUPA</name>
<dbReference type="EC" id="5.6.1.7" evidence="1"/>
<dbReference type="EMBL" id="AF352578">
    <property type="protein sequence ID" value="AAK18614.1"/>
    <property type="molecule type" value="Genomic_DNA"/>
</dbReference>
<dbReference type="SMR" id="Q9AFA5"/>
<dbReference type="GO" id="GO:0005737">
    <property type="term" value="C:cytoplasm"/>
    <property type="evidence" value="ECO:0007669"/>
    <property type="project" value="UniProtKB-SubCell"/>
</dbReference>
<dbReference type="GO" id="GO:0005524">
    <property type="term" value="F:ATP binding"/>
    <property type="evidence" value="ECO:0007669"/>
    <property type="project" value="UniProtKB-UniRule"/>
</dbReference>
<dbReference type="GO" id="GO:0140662">
    <property type="term" value="F:ATP-dependent protein folding chaperone"/>
    <property type="evidence" value="ECO:0007669"/>
    <property type="project" value="InterPro"/>
</dbReference>
<dbReference type="GO" id="GO:0016853">
    <property type="term" value="F:isomerase activity"/>
    <property type="evidence" value="ECO:0007669"/>
    <property type="project" value="UniProtKB-KW"/>
</dbReference>
<dbReference type="GO" id="GO:0051082">
    <property type="term" value="F:unfolded protein binding"/>
    <property type="evidence" value="ECO:0007669"/>
    <property type="project" value="UniProtKB-UniRule"/>
</dbReference>
<dbReference type="GO" id="GO:0042026">
    <property type="term" value="P:protein refolding"/>
    <property type="evidence" value="ECO:0007669"/>
    <property type="project" value="UniProtKB-UniRule"/>
</dbReference>
<dbReference type="CDD" id="cd03344">
    <property type="entry name" value="GroEL"/>
    <property type="match status" value="1"/>
</dbReference>
<dbReference type="FunFam" id="3.50.7.10:FF:000001">
    <property type="entry name" value="60 kDa chaperonin"/>
    <property type="match status" value="1"/>
</dbReference>
<dbReference type="Gene3D" id="3.50.7.10">
    <property type="entry name" value="GroEL"/>
    <property type="match status" value="1"/>
</dbReference>
<dbReference type="Gene3D" id="1.10.560.10">
    <property type="entry name" value="GroEL-like equatorial domain"/>
    <property type="match status" value="1"/>
</dbReference>
<dbReference type="Gene3D" id="3.30.260.10">
    <property type="entry name" value="TCP-1-like chaperonin intermediate domain"/>
    <property type="match status" value="1"/>
</dbReference>
<dbReference type="HAMAP" id="MF_00600">
    <property type="entry name" value="CH60"/>
    <property type="match status" value="1"/>
</dbReference>
<dbReference type="InterPro" id="IPR018370">
    <property type="entry name" value="Chaperonin_Cpn60_CS"/>
</dbReference>
<dbReference type="InterPro" id="IPR001844">
    <property type="entry name" value="Cpn60/GroEL"/>
</dbReference>
<dbReference type="InterPro" id="IPR002423">
    <property type="entry name" value="Cpn60/GroEL/TCP-1"/>
</dbReference>
<dbReference type="InterPro" id="IPR027409">
    <property type="entry name" value="GroEL-like_apical_dom_sf"/>
</dbReference>
<dbReference type="InterPro" id="IPR027413">
    <property type="entry name" value="GROEL-like_equatorial_sf"/>
</dbReference>
<dbReference type="InterPro" id="IPR027410">
    <property type="entry name" value="TCP-1-like_intermed_sf"/>
</dbReference>
<dbReference type="NCBIfam" id="TIGR02348">
    <property type="entry name" value="GroEL"/>
    <property type="match status" value="1"/>
</dbReference>
<dbReference type="NCBIfam" id="NF000592">
    <property type="entry name" value="PRK00013.1"/>
    <property type="match status" value="1"/>
</dbReference>
<dbReference type="NCBIfam" id="NF009487">
    <property type="entry name" value="PRK12849.1"/>
    <property type="match status" value="1"/>
</dbReference>
<dbReference type="NCBIfam" id="NF009488">
    <property type="entry name" value="PRK12850.1"/>
    <property type="match status" value="1"/>
</dbReference>
<dbReference type="NCBIfam" id="NF009489">
    <property type="entry name" value="PRK12851.1"/>
    <property type="match status" value="1"/>
</dbReference>
<dbReference type="PANTHER" id="PTHR45633">
    <property type="entry name" value="60 KDA HEAT SHOCK PROTEIN, MITOCHONDRIAL"/>
    <property type="match status" value="1"/>
</dbReference>
<dbReference type="Pfam" id="PF00118">
    <property type="entry name" value="Cpn60_TCP1"/>
    <property type="match status" value="1"/>
</dbReference>
<dbReference type="PRINTS" id="PR00298">
    <property type="entry name" value="CHAPERONIN60"/>
</dbReference>
<dbReference type="SUPFAM" id="SSF52029">
    <property type="entry name" value="GroEL apical domain-like"/>
    <property type="match status" value="1"/>
</dbReference>
<dbReference type="SUPFAM" id="SSF48592">
    <property type="entry name" value="GroEL equatorial domain-like"/>
    <property type="match status" value="1"/>
</dbReference>
<dbReference type="SUPFAM" id="SSF54849">
    <property type="entry name" value="GroEL-intermediate domain like"/>
    <property type="match status" value="1"/>
</dbReference>
<dbReference type="PROSITE" id="PS00296">
    <property type="entry name" value="CHAPERONINS_CPN60"/>
    <property type="match status" value="1"/>
</dbReference>